<proteinExistence type="evidence at protein level"/>
<comment type="function">
    <text evidence="2">Involved in catabolism of D-apiose. Catalyzes the transfer of the glycolaldehyde group from apulose-4-phosphate to D-glyceraldehyde 3-phosphate, generating dihydroxyacetone phosphate and D-xylulose-5-phosphate.</text>
</comment>
<comment type="catalytic activity">
    <reaction evidence="2">
        <text>apulose 4-phosphate + D-glyceraldehyde 3-phosphate = D-xylulose 5-phosphate + dihydroxyacetone phosphate</text>
        <dbReference type="Rhea" id="RHEA:57024"/>
        <dbReference type="ChEBI" id="CHEBI:57642"/>
        <dbReference type="ChEBI" id="CHEBI:57737"/>
        <dbReference type="ChEBI" id="CHEBI:59776"/>
        <dbReference type="ChEBI" id="CHEBI:141351"/>
        <dbReference type="EC" id="2.2.1.13"/>
    </reaction>
</comment>
<comment type="cofactor">
    <cofactor evidence="1">
        <name>thiamine diphosphate</name>
        <dbReference type="ChEBI" id="CHEBI:58937"/>
    </cofactor>
</comment>
<comment type="pathway">
    <text evidence="2">Carbohydrate metabolism.</text>
</comment>
<comment type="subunit">
    <text evidence="4">Probable heterodimer composed of AptA and AptB.</text>
</comment>
<comment type="similarity">
    <text evidence="3">Belongs to the transketolase family.</text>
</comment>
<protein>
    <recommendedName>
        <fullName evidence="3">Apulose-4-phosphate transketolase subunit B</fullName>
        <ecNumber evidence="2">2.2.1.13</ecNumber>
    </recommendedName>
    <alternativeName>
        <fullName evidence="3">Apulose-4-phosphate transketolase C-terminal subunit</fullName>
    </alternativeName>
</protein>
<accession>A6VKQ3</accession>
<gene>
    <name evidence="4" type="primary">aptB</name>
    <name evidence="5" type="ordered locus">Asuc_0170</name>
</gene>
<name>APTB_ACTSZ</name>
<evidence type="ECO:0000250" key="1">
    <source>
        <dbReference type="UniProtKB" id="P29401"/>
    </source>
</evidence>
<evidence type="ECO:0000269" key="2">
    <source>
    </source>
</evidence>
<evidence type="ECO:0000305" key="3"/>
<evidence type="ECO:0000305" key="4">
    <source>
    </source>
</evidence>
<evidence type="ECO:0000312" key="5">
    <source>
        <dbReference type="EMBL" id="ABR73550.1"/>
    </source>
</evidence>
<keyword id="KW-0119">Carbohydrate metabolism</keyword>
<keyword id="KW-1185">Reference proteome</keyword>
<keyword id="KW-0786">Thiamine pyrophosphate</keyword>
<keyword id="KW-0808">Transferase</keyword>
<sequence>MSNAEHLANIMVERFISAVKNGVDLVPVVADSTSTAKIAPFIKEFPDRLVNVGIAEQSLVGCAAGLALGGKVAVTCNAAPFLISRANEQVKVDVCYNNTNVKLFGLNSGASYGPLASTHHSIDDIGVMRGFGNIQIFAPSSPNECRQIIDYAINYVGPVYIRLDGKELPEIHNDDYEFVPGQIDVLRKGGKIALVAMGSTVYEIVDAAVKLAEKGIEVTVVNVPSIRPCDTEALFNAIKDCKYVISVEEHNINGGVGSLVAEVIAEHGAPITLKRRGIADGGYALAGDRKSMRKHHGIDADSIVDLALSLN</sequence>
<reference key="1">
    <citation type="journal article" date="2010" name="BMC Genomics">
        <title>A genomic perspective on the potential of Actinobacillus succinogenes for industrial succinate production.</title>
        <authorList>
            <person name="McKinlay J.B."/>
            <person name="Laivenieks M."/>
            <person name="Schindler B.D."/>
            <person name="McKinlay A.A."/>
            <person name="Siddaramappa S."/>
            <person name="Challacombe J.F."/>
            <person name="Lowry S.R."/>
            <person name="Clum A."/>
            <person name="Lapidus A.L."/>
            <person name="Burkhart K.B."/>
            <person name="Harkins V."/>
            <person name="Vieille C."/>
        </authorList>
    </citation>
    <scope>NUCLEOTIDE SEQUENCE [LARGE SCALE GENOMIC DNA]</scope>
    <source>
        <strain>ATCC 55618 / DSM 22257 / CCUG 43843 / 130Z</strain>
    </source>
</reference>
<reference key="2">
    <citation type="journal article" date="2018" name="Nat. Chem. Biol.">
        <title>Functional assignment of multiple catabolic pathways for D-apiose.</title>
        <authorList>
            <person name="Carter M.S."/>
            <person name="Zhang X."/>
            <person name="Huang H."/>
            <person name="Bouvier J.T."/>
            <person name="Francisco B.S."/>
            <person name="Vetting M.W."/>
            <person name="Al-Obaidi N."/>
            <person name="Bonanno J.B."/>
            <person name="Ghosh A."/>
            <person name="Zallot R.G."/>
            <person name="Andersen H.M."/>
            <person name="Almo S.C."/>
            <person name="Gerlt J.A."/>
        </authorList>
    </citation>
    <scope>FUNCTION</scope>
    <scope>CATALYTIC ACTIVITY</scope>
    <scope>PATHWAY</scope>
    <scope>SUBUNIT</scope>
</reference>
<dbReference type="EC" id="2.2.1.13" evidence="2"/>
<dbReference type="EMBL" id="CP000746">
    <property type="protein sequence ID" value="ABR73550.1"/>
    <property type="molecule type" value="Genomic_DNA"/>
</dbReference>
<dbReference type="RefSeq" id="WP_011978826.1">
    <property type="nucleotide sequence ID" value="NC_009655.1"/>
</dbReference>
<dbReference type="SMR" id="A6VKQ3"/>
<dbReference type="STRING" id="339671.Asuc_0170"/>
<dbReference type="KEGG" id="asu:Asuc_0170"/>
<dbReference type="eggNOG" id="COG3958">
    <property type="taxonomic scope" value="Bacteria"/>
</dbReference>
<dbReference type="HOGENOM" id="CLU_009227_1_1_6"/>
<dbReference type="OrthoDB" id="8732661at2"/>
<dbReference type="BioCyc" id="MetaCyc:MONOMER-20957"/>
<dbReference type="BRENDA" id="2.2.1.13">
    <property type="organism ID" value="8032"/>
</dbReference>
<dbReference type="SABIO-RK" id="A6VKQ3"/>
<dbReference type="Proteomes" id="UP000001114">
    <property type="component" value="Chromosome"/>
</dbReference>
<dbReference type="GO" id="GO:0016740">
    <property type="term" value="F:transferase activity"/>
    <property type="evidence" value="ECO:0007669"/>
    <property type="project" value="UniProtKB-KW"/>
</dbReference>
<dbReference type="CDD" id="cd07033">
    <property type="entry name" value="TPP_PYR_DXS_TK_like"/>
    <property type="match status" value="1"/>
</dbReference>
<dbReference type="FunFam" id="3.40.50.970:FF:000129">
    <property type="entry name" value="Transketolase"/>
    <property type="match status" value="1"/>
</dbReference>
<dbReference type="Gene3D" id="3.40.50.920">
    <property type="match status" value="1"/>
</dbReference>
<dbReference type="Gene3D" id="3.40.50.970">
    <property type="match status" value="1"/>
</dbReference>
<dbReference type="InterPro" id="IPR051157">
    <property type="entry name" value="PDH/Transketolase"/>
</dbReference>
<dbReference type="InterPro" id="IPR029061">
    <property type="entry name" value="THDP-binding"/>
</dbReference>
<dbReference type="InterPro" id="IPR009014">
    <property type="entry name" value="Transketo_C/PFOR_II"/>
</dbReference>
<dbReference type="InterPro" id="IPR005475">
    <property type="entry name" value="Transketolase-like_Pyr-bd"/>
</dbReference>
<dbReference type="InterPro" id="IPR033248">
    <property type="entry name" value="Transketolase_C"/>
</dbReference>
<dbReference type="PANTHER" id="PTHR43825">
    <property type="entry name" value="PYRUVATE DEHYDROGENASE E1 COMPONENT"/>
    <property type="match status" value="1"/>
</dbReference>
<dbReference type="PANTHER" id="PTHR43825:SF1">
    <property type="entry name" value="TRANSKETOLASE-LIKE PYRIMIDINE-BINDING DOMAIN-CONTAINING PROTEIN"/>
    <property type="match status" value="1"/>
</dbReference>
<dbReference type="Pfam" id="PF02779">
    <property type="entry name" value="Transket_pyr"/>
    <property type="match status" value="1"/>
</dbReference>
<dbReference type="Pfam" id="PF02780">
    <property type="entry name" value="Transketolase_C"/>
    <property type="match status" value="1"/>
</dbReference>
<dbReference type="SMART" id="SM00861">
    <property type="entry name" value="Transket_pyr"/>
    <property type="match status" value="1"/>
</dbReference>
<dbReference type="SUPFAM" id="SSF52518">
    <property type="entry name" value="Thiamin diphosphate-binding fold (THDP-binding)"/>
    <property type="match status" value="1"/>
</dbReference>
<dbReference type="SUPFAM" id="SSF52922">
    <property type="entry name" value="TK C-terminal domain-like"/>
    <property type="match status" value="1"/>
</dbReference>
<organism>
    <name type="scientific">Actinobacillus succinogenes (strain ATCC 55618 / DSM 22257 / CCUG 43843 / 130Z)</name>
    <dbReference type="NCBI Taxonomy" id="339671"/>
    <lineage>
        <taxon>Bacteria</taxon>
        <taxon>Pseudomonadati</taxon>
        <taxon>Pseudomonadota</taxon>
        <taxon>Gammaproteobacteria</taxon>
        <taxon>Pasteurellales</taxon>
        <taxon>Pasteurellaceae</taxon>
        <taxon>Actinobacillus</taxon>
    </lineage>
</organism>
<feature type="chain" id="PRO_0000446027" description="Apulose-4-phosphate transketolase subunit B">
    <location>
        <begin position="1"/>
        <end position="311"/>
    </location>
</feature>